<protein>
    <recommendedName>
        <fullName>Gag-Pol polyprotein</fullName>
    </recommendedName>
    <alternativeName>
        <fullName>Pr160Gag-Pol</fullName>
    </alternativeName>
    <component>
        <recommendedName>
            <fullName>Matrix protein p17</fullName>
            <shortName>MA</shortName>
        </recommendedName>
    </component>
    <component>
        <recommendedName>
            <fullName>Capsid protein p24</fullName>
            <shortName>CA</shortName>
        </recommendedName>
    </component>
    <component>
        <recommendedName>
            <fullName evidence="8">Spacer peptide 1</fullName>
            <shortName>SP1</shortName>
        </recommendedName>
        <alternativeName>
            <fullName>p2</fullName>
        </alternativeName>
    </component>
    <component>
        <recommendedName>
            <fullName>Nucleocapsid protein p7</fullName>
            <shortName>NC</shortName>
        </recommendedName>
    </component>
    <component>
        <recommendedName>
            <fullName>Transframe peptide</fullName>
            <shortName>TF</shortName>
        </recommendedName>
    </component>
    <component>
        <recommendedName>
            <fullName>p6-pol</fullName>
            <shortName>p6*</shortName>
        </recommendedName>
    </component>
    <component>
        <recommendedName>
            <fullName>Protease</fullName>
            <ecNumber>3.4.23.47</ecNumber>
        </recommendedName>
        <alternativeName>
            <fullName>PR</fullName>
        </alternativeName>
        <alternativeName>
            <fullName>Retropepsin</fullName>
        </alternativeName>
    </component>
    <component>
        <recommendedName>
            <fullName>Reverse transcriptase/ribonuclease H</fullName>
            <ecNumber>2.7.7.49</ecNumber>
            <ecNumber>2.7.7.7</ecNumber>
            <ecNumber>3.1.26.13</ecNumber>
        </recommendedName>
        <alternativeName>
            <fullName>Exoribonuclease H</fullName>
            <ecNumber>3.1.13.2</ecNumber>
        </alternativeName>
        <alternativeName>
            <fullName>p66 RT</fullName>
        </alternativeName>
    </component>
    <component>
        <recommendedName>
            <fullName>p51 RT</fullName>
        </recommendedName>
    </component>
    <component>
        <recommendedName>
            <fullName>p15</fullName>
        </recommendedName>
    </component>
    <component>
        <recommendedName>
            <fullName>Integrase</fullName>
            <shortName>IN</shortName>
            <ecNumber evidence="5">2.7.7.-</ecNumber>
            <ecNumber evidence="5">3.1.-.-</ecNumber>
        </recommendedName>
    </component>
</protein>
<sequence>MGARGSVLSGKKTDELEKVRLRPGGKKKYMLKHVVWAVNELDRFGLAESLLESKEGCQKILKVLAPLVPTGSENLKSLFNIVCVIFCLHAEEKVKDTEEAKKIAQRHLAADTEKMPATNKPTAPPSGGNYPVQQLAGNYVHLPLSPRTLNAWVKLVEEKKFGAEVVPGFQALSEGCTPYDINQMLNCVGEHQAAMQIIREIINEEAADWDQQHPSPGPMPAGQLRDPRGSDIAGTTSTVEEQIQWMYRAQNPVPVGNIYRRWIQLGLQKCVRMYNPTNILDIKQGPKEPFQSYVDRFYKSLRAEQTDPAVKNWMTQTLLIQNANPDCKLVLKGLGMNPTLEEMLTACQGIGGPGQKARLMAEALKEALTPAPIPFAAVQQKAGKRGTVTCWNCGKQGHTARQCRAPRRQGCWKCGKTGHIMSKCPERQAGFLRVRTLGKEASQLPHDPSASGSDTICTPDEPSRGHDTSGGDTICAPCRSSSGDAEKLHADGETTEREPRETLQGGDRGFAAPQFSLWRRPVVKACIEGQSVEVLLDTGVDDSIVAGIELGSNYTPKIVGGIGGFINTKEYKDVEIEVVGKRVRATIMTGDTPINIFGRNILNTLGMTLNFPVAKVEPVKVELKPGKDGPKIRQWPLSREKILALKEICEKMEKEGQLEEAPPTNPYNTPTFAIKKKDKNKWRMLIDFRELNKVTQDFTEVNWVFPTRQVAEKRRITVIDVGDAYFSIPLDPNFRQYTAFTLPSVNNAEPGKRYIYKVLPQGWKGSQSICQYSMRKVLDPFRKANSDVIIIQYMDDILIASDRSDLEHDRVVSQLKELLNDMGFSTPEEKFQKDPPFKWMGYELWPKKWKLQKIQLPEKEVWTVNAIQKLVGVLNWAAQLFPGIKTRHICKLIRGKMTLTEEVQWTELAEAELQENKIILEQEQEGSYYKERVPLEATVQKNLANQWTYKIHQGNKVLKVGKYAKVKNTHTNGVRLLAHVVQKIGKEALVIWGEIPVFHLPVERETWDQWWTDYWQVTWIPEWDFVSTPPLIRLAYNLVKDPLEGRETYYTDGSCNRTSKEGKAGYVTDRGKDKVKVLEQTTNQQAELEAFALALTDSEPQVNIIVDSQYVMGIIAAQPTETESPIVAKIIEEMIKKEAVYVGWVPAHKGLGGNQEVDHLVSQGIRQVLFLEKIEPAQEEHEKYHGNVKELVHKFGIPQLVAKQIVNSCDKCQQKGEAIHGQVNADLGTWQMDCTHLEGKIIIVAVHVASGFIEAEVIPQETGRQTALFLLKLASRWPITHLHTDNGANFTSPSVKMVAWWVGIEQTFGVPYNPQSQGVVEAMNHHLKNQIDRLRDQAVSIETVVLMATHCMNFKRRGGIGDMTPAERLVNMITTEQEIQFFQAKNLKFQNFQVYYREGRDQLWKGPGELLWKGEGAVIIKVGTEIKVVPRRKAKIIRHYGGGKGLDCSADMEDTRQAREMAQSD</sequence>
<feature type="initiator methionine" description="Removed; by host" evidence="1">
    <location>
        <position position="1"/>
    </location>
</feature>
<feature type="chain" id="PRO_0000261293" description="Gag-Pol polyprotein">
    <location>
        <begin position="2"/>
        <end position="1465"/>
    </location>
</feature>
<feature type="chain" id="PRO_0000042482" description="Matrix protein p17" evidence="1">
    <location>
        <begin position="2"/>
        <end position="130"/>
    </location>
</feature>
<feature type="chain" id="PRO_0000042483" description="Capsid protein p24" evidence="1">
    <location>
        <begin position="131"/>
        <end position="360"/>
    </location>
</feature>
<feature type="peptide" id="PRO_0000042484" description="Spacer peptide 1" evidence="1">
    <location>
        <begin position="361"/>
        <end position="377"/>
    </location>
</feature>
<feature type="chain" id="PRO_0000042486" description="Nucleocapsid protein p7" evidence="1">
    <location>
        <begin position="378"/>
        <end position="430"/>
    </location>
</feature>
<feature type="peptide" id="PRO_0000246742" description="Transframe peptide" evidence="9">
    <location>
        <begin position="431"/>
        <end position="444"/>
    </location>
</feature>
<feature type="chain" id="PRO_0000042488" description="p6-pol" evidence="9">
    <location>
        <begin position="445"/>
        <end position="512"/>
    </location>
</feature>
<feature type="chain" id="PRO_0000038669" description="Protease" evidence="1">
    <location>
        <begin position="513"/>
        <end position="611"/>
    </location>
</feature>
<feature type="chain" id="PRO_0000042489" description="Reverse transcriptase/ribonuclease H" evidence="1">
    <location>
        <begin position="612"/>
        <end position="1169"/>
    </location>
</feature>
<feature type="chain" id="PRO_0000042490" description="p51 RT" evidence="1">
    <location>
        <begin position="612"/>
        <end position="1049"/>
    </location>
</feature>
<feature type="chain" id="PRO_0000042491" description="p15" evidence="1">
    <location>
        <begin position="1050"/>
        <end position="1169"/>
    </location>
</feature>
<feature type="chain" id="PRO_0000042492" description="Integrase" evidence="1">
    <location>
        <begin position="1170"/>
        <end position="1465"/>
    </location>
</feature>
<feature type="domain" description="Peptidase A2" evidence="11">
    <location>
        <begin position="532"/>
        <end position="601"/>
    </location>
</feature>
<feature type="domain" description="Reverse transcriptase" evidence="12">
    <location>
        <begin position="655"/>
        <end position="844"/>
    </location>
</feature>
<feature type="domain" description="RNase H type-1" evidence="13">
    <location>
        <begin position="1043"/>
        <end position="1166"/>
    </location>
</feature>
<feature type="domain" description="Integrase catalytic" evidence="15">
    <location>
        <begin position="1222"/>
        <end position="1373"/>
    </location>
</feature>
<feature type="zinc finger region" description="CCHC-type 1" evidence="10">
    <location>
        <begin position="388"/>
        <end position="405"/>
    </location>
</feature>
<feature type="zinc finger region" description="CCHC-type 2" evidence="10">
    <location>
        <begin position="409"/>
        <end position="426"/>
    </location>
</feature>
<feature type="zinc finger region" description="Integrase-type" evidence="14">
    <location>
        <begin position="1172"/>
        <end position="1213"/>
    </location>
</feature>
<feature type="DNA-binding region" description="Integrase-type" evidence="16">
    <location>
        <begin position="1392"/>
        <end position="1439"/>
    </location>
</feature>
<feature type="region of interest" description="Interaction with Gp41" evidence="8">
    <location>
        <begin position="7"/>
        <end position="31"/>
    </location>
</feature>
<feature type="region of interest" description="Disordered" evidence="18">
    <location>
        <begin position="105"/>
        <end position="129"/>
    </location>
</feature>
<feature type="region of interest" description="Interaction with human PPIA/CYPA and NUP153" evidence="8">
    <location>
        <begin position="186"/>
        <end position="223"/>
    </location>
</feature>
<feature type="region of interest" description="Dimerization/Multimerization of capsid protein p24" evidence="5">
    <location>
        <begin position="274"/>
        <end position="360"/>
    </location>
</feature>
<feature type="region of interest" description="Disordered" evidence="18">
    <location>
        <begin position="441"/>
        <end position="508"/>
    </location>
</feature>
<feature type="region of interest" description="Dimerization of protease" evidence="5">
    <location>
        <begin position="513"/>
        <end position="517"/>
    </location>
</feature>
<feature type="region of interest" description="Dimerization of protease" evidence="5">
    <location>
        <begin position="561"/>
        <end position="567"/>
    </location>
</feature>
<feature type="region of interest" description="Dimerization of protease" evidence="5">
    <location>
        <begin position="600"/>
        <end position="612"/>
    </location>
</feature>
<feature type="region of interest" description="RT 'primer grip'" evidence="1">
    <location>
        <begin position="837"/>
        <end position="845"/>
    </location>
</feature>
<feature type="short sequence motif" description="Nuclear export signal" evidence="1">
    <location>
        <begin position="16"/>
        <end position="22"/>
    </location>
</feature>
<feature type="short sequence motif" description="Nuclear localization signal" evidence="1">
    <location>
        <begin position="26"/>
        <end position="32"/>
    </location>
</feature>
<feature type="short sequence motif" description="Tryptophan repeat motif" evidence="1">
    <location>
        <begin position="1007"/>
        <end position="1023"/>
    </location>
</feature>
<feature type="compositionally biased region" description="Basic and acidic residues" evidence="18">
    <location>
        <begin position="105"/>
        <end position="114"/>
    </location>
</feature>
<feature type="compositionally biased region" description="Basic and acidic residues" evidence="18">
    <location>
        <begin position="484"/>
        <end position="501"/>
    </location>
</feature>
<feature type="active site" description="For protease activity; shared with dimeric partner" evidence="17">
    <location>
        <position position="537"/>
    </location>
</feature>
<feature type="binding site" evidence="1">
    <location>
        <position position="720"/>
    </location>
    <ligand>
        <name>Mg(2+)</name>
        <dbReference type="ChEBI" id="CHEBI:18420"/>
        <label>1</label>
        <note>catalytic; for reverse transcriptase activity</note>
    </ligand>
</feature>
<feature type="binding site" evidence="1">
    <location>
        <position position="795"/>
    </location>
    <ligand>
        <name>Mg(2+)</name>
        <dbReference type="ChEBI" id="CHEBI:18420"/>
        <label>1</label>
        <note>catalytic; for reverse transcriptase activity</note>
    </ligand>
</feature>
<feature type="binding site" evidence="1">
    <location>
        <position position="796"/>
    </location>
    <ligand>
        <name>Mg(2+)</name>
        <dbReference type="ChEBI" id="CHEBI:18420"/>
        <label>1</label>
        <note>catalytic; for reverse transcriptase activity</note>
    </ligand>
</feature>
<feature type="binding site" evidence="1">
    <location>
        <position position="1052"/>
    </location>
    <ligand>
        <name>Mg(2+)</name>
        <dbReference type="ChEBI" id="CHEBI:18420"/>
        <label>2</label>
        <note>catalytic; for RNase H activity</note>
    </ligand>
</feature>
<feature type="binding site" evidence="1">
    <location>
        <position position="1087"/>
    </location>
    <ligand>
        <name>Mg(2+)</name>
        <dbReference type="ChEBI" id="CHEBI:18420"/>
        <label>2</label>
        <note>catalytic; for RNase H activity</note>
    </ligand>
</feature>
<feature type="binding site" evidence="1">
    <location>
        <position position="1107"/>
    </location>
    <ligand>
        <name>Mg(2+)</name>
        <dbReference type="ChEBI" id="CHEBI:18420"/>
        <label>2</label>
        <note>catalytic; for RNase H activity</note>
    </ligand>
</feature>
<feature type="binding site" evidence="1">
    <location>
        <position position="1158"/>
    </location>
    <ligand>
        <name>Mg(2+)</name>
        <dbReference type="ChEBI" id="CHEBI:18420"/>
        <label>2</label>
        <note>catalytic; for RNase H activity</note>
    </ligand>
</feature>
<feature type="binding site" evidence="14">
    <location>
        <position position="1181"/>
    </location>
    <ligand>
        <name>Zn(2+)</name>
        <dbReference type="ChEBI" id="CHEBI:29105"/>
    </ligand>
</feature>
<feature type="binding site" evidence="14">
    <location>
        <position position="1185"/>
    </location>
    <ligand>
        <name>Zn(2+)</name>
        <dbReference type="ChEBI" id="CHEBI:29105"/>
    </ligand>
</feature>
<feature type="binding site" evidence="14">
    <location>
        <position position="1209"/>
    </location>
    <ligand>
        <name>Zn(2+)</name>
        <dbReference type="ChEBI" id="CHEBI:29105"/>
    </ligand>
</feature>
<feature type="binding site" evidence="14">
    <location>
        <position position="1212"/>
    </location>
    <ligand>
        <name>Zn(2+)</name>
        <dbReference type="ChEBI" id="CHEBI:29105"/>
    </ligand>
</feature>
<feature type="binding site" evidence="1">
    <location>
        <position position="1233"/>
    </location>
    <ligand>
        <name>Mg(2+)</name>
        <dbReference type="ChEBI" id="CHEBI:18420"/>
        <label>3</label>
        <note>catalytic; for integrase activity</note>
    </ligand>
</feature>
<feature type="binding site" evidence="1">
    <location>
        <position position="1285"/>
    </location>
    <ligand>
        <name>Mg(2+)</name>
        <dbReference type="ChEBI" id="CHEBI:18420"/>
        <label>3</label>
        <note>catalytic; for integrase activity</note>
    </ligand>
</feature>
<feature type="binding site" evidence="5">
    <location>
        <position position="1321"/>
    </location>
    <ligand>
        <name>Mg(2+)</name>
        <dbReference type="ChEBI" id="CHEBI:18420"/>
        <label>3</label>
        <note>catalytic; for integrase activity</note>
    </ligand>
</feature>
<feature type="site" description="Cleavage; by viral protease" evidence="1">
    <location>
        <begin position="130"/>
        <end position="131"/>
    </location>
</feature>
<feature type="site" description="Cis/trans isomerization of proline peptide bond; by human PPIA/CYPA" evidence="1">
    <location>
        <begin position="217"/>
        <end position="218"/>
    </location>
</feature>
<feature type="site" description="Cleavage; by viral protease" evidence="1">
    <location>
        <begin position="360"/>
        <end position="361"/>
    </location>
</feature>
<feature type="site" description="Cleavage; by viral protease" evidence="1">
    <location>
        <begin position="377"/>
        <end position="378"/>
    </location>
</feature>
<feature type="site" description="Cleavage; by viral protease" evidence="9">
    <location>
        <begin position="430"/>
        <end position="431"/>
    </location>
</feature>
<feature type="site" description="Cleavage; by viral protease" evidence="1">
    <location>
        <begin position="444"/>
        <end position="445"/>
    </location>
</feature>
<feature type="site" description="Cleavage; by viral protease" evidence="1">
    <location>
        <begin position="512"/>
        <end position="513"/>
    </location>
</feature>
<feature type="site" description="Cleavage; by viral protease" evidence="1">
    <location>
        <begin position="611"/>
        <end position="612"/>
    </location>
</feature>
<feature type="site" description="Essential for RT p66/p51 heterodimerization" evidence="1">
    <location>
        <position position="1010"/>
    </location>
</feature>
<feature type="site" description="Essential for RT p66/p51 heterodimerization" evidence="1">
    <location>
        <position position="1023"/>
    </location>
</feature>
<feature type="site" description="Cleavage; by viral protease; partial" evidence="1">
    <location>
        <begin position="1049"/>
        <end position="1050"/>
    </location>
</feature>
<feature type="site" description="Cleavage; by viral protease" evidence="1">
    <location>
        <begin position="1169"/>
        <end position="1170"/>
    </location>
</feature>
<feature type="modified residue" description="Phosphotyrosine; by host" evidence="1">
    <location>
        <position position="130"/>
    </location>
</feature>
<feature type="lipid moiety-binding region" description="N-myristoyl glycine; by host" evidence="1">
    <location>
        <position position="2"/>
    </location>
</feature>
<organism>
    <name type="scientific">Human immunodeficiency virus type 2 subtype B (isolate D205)</name>
    <name type="common">HIV-2</name>
    <dbReference type="NCBI Taxonomy" id="11716"/>
    <lineage>
        <taxon>Viruses</taxon>
        <taxon>Riboviria</taxon>
        <taxon>Pararnavirae</taxon>
        <taxon>Artverviricota</taxon>
        <taxon>Revtraviricetes</taxon>
        <taxon>Ortervirales</taxon>
        <taxon>Retroviridae</taxon>
        <taxon>Orthoretrovirinae</taxon>
        <taxon>Lentivirus</taxon>
        <taxon>Human immunodeficiency virus 2</taxon>
    </lineage>
</organism>
<organismHost>
    <name type="scientific">Homo sapiens</name>
    <name type="common">Human</name>
    <dbReference type="NCBI Taxonomy" id="9606"/>
</organismHost>
<gene>
    <name type="primary">gag-pol</name>
</gene>
<name>POL_HV2D2</name>
<evidence type="ECO:0000250" key="1"/>
<evidence type="ECO:0000250" key="2">
    <source>
        <dbReference type="UniProtKB" id="P03348"/>
    </source>
</evidence>
<evidence type="ECO:0000250" key="3">
    <source>
        <dbReference type="UniProtKB" id="P03366"/>
    </source>
</evidence>
<evidence type="ECO:0000250" key="4">
    <source>
        <dbReference type="UniProtKB" id="P03367"/>
    </source>
</evidence>
<evidence type="ECO:0000250" key="5">
    <source>
        <dbReference type="UniProtKB" id="P04585"/>
    </source>
</evidence>
<evidence type="ECO:0000250" key="6">
    <source>
        <dbReference type="UniProtKB" id="P04591"/>
    </source>
</evidence>
<evidence type="ECO:0000250" key="7">
    <source>
        <dbReference type="UniProtKB" id="P12493"/>
    </source>
</evidence>
<evidence type="ECO:0000250" key="8">
    <source>
        <dbReference type="UniProtKB" id="P12497"/>
    </source>
</evidence>
<evidence type="ECO:0000255" key="9"/>
<evidence type="ECO:0000255" key="10">
    <source>
        <dbReference type="PROSITE-ProRule" id="PRU00047"/>
    </source>
</evidence>
<evidence type="ECO:0000255" key="11">
    <source>
        <dbReference type="PROSITE-ProRule" id="PRU00275"/>
    </source>
</evidence>
<evidence type="ECO:0000255" key="12">
    <source>
        <dbReference type="PROSITE-ProRule" id="PRU00405"/>
    </source>
</evidence>
<evidence type="ECO:0000255" key="13">
    <source>
        <dbReference type="PROSITE-ProRule" id="PRU00408"/>
    </source>
</evidence>
<evidence type="ECO:0000255" key="14">
    <source>
        <dbReference type="PROSITE-ProRule" id="PRU00450"/>
    </source>
</evidence>
<evidence type="ECO:0000255" key="15">
    <source>
        <dbReference type="PROSITE-ProRule" id="PRU00457"/>
    </source>
</evidence>
<evidence type="ECO:0000255" key="16">
    <source>
        <dbReference type="PROSITE-ProRule" id="PRU00506"/>
    </source>
</evidence>
<evidence type="ECO:0000255" key="17">
    <source>
        <dbReference type="PROSITE-ProRule" id="PRU10094"/>
    </source>
</evidence>
<evidence type="ECO:0000256" key="18">
    <source>
        <dbReference type="SAM" id="MobiDB-lite"/>
    </source>
</evidence>
<evidence type="ECO:0000305" key="19"/>
<reference key="1">
    <citation type="journal article" date="1989" name="Nature">
        <title>A highly divergent HIV-2-related isolate.</title>
        <authorList>
            <person name="Dietrich U."/>
            <person name="Adamski M."/>
            <person name="Kreutz R."/>
            <person name="Seipp A."/>
            <person name="Kuehnel H."/>
            <person name="Ruebsamen-Waigmann H."/>
        </authorList>
    </citation>
    <scope>NUCLEOTIDE SEQUENCE [GENOMIC DNA]</scope>
</reference>
<reference key="2">
    <citation type="journal article" date="1996" name="Curr. Top. Microbiol. Immunol.">
        <title>Proteolytic processing and particle maturation.</title>
        <authorList>
            <person name="Vogt V.M."/>
        </authorList>
    </citation>
    <scope>REVIEW</scope>
</reference>
<reference key="3">
    <citation type="journal article" date="1999" name="J. Mol. Biol.">
        <title>Structural biology of HIV.</title>
        <authorList>
            <person name="Turner B.G."/>
            <person name="Summers M.F."/>
        </authorList>
    </citation>
    <scope>REVIEW</scope>
</reference>
<reference key="4">
    <citation type="journal article" date="2001" name="Annu. Rev. Genet.">
        <title>Mechanisms of retroviral recombination.</title>
        <authorList>
            <person name="Negroni M."/>
            <person name="Buc H."/>
        </authorList>
    </citation>
    <scope>REVIEW</scope>
</reference>
<reference key="5">
    <citation type="journal article" date="2002" name="Genome Biol.">
        <title>Retroviral proteases.</title>
        <authorList>
            <person name="Dunn B.M."/>
            <person name="Goodenow M.M."/>
            <person name="Gustchina A."/>
            <person name="Wlodawer A."/>
        </authorList>
    </citation>
    <scope>REVIEW</scope>
</reference>
<proteinExistence type="inferred from homology"/>
<dbReference type="EC" id="3.4.23.47"/>
<dbReference type="EC" id="2.7.7.49"/>
<dbReference type="EC" id="2.7.7.7"/>
<dbReference type="EC" id="3.1.26.13"/>
<dbReference type="EC" id="3.1.13.2"/>
<dbReference type="EC" id="2.7.7.-" evidence="5"/>
<dbReference type="EC" id="3.1.-.-" evidence="5"/>
<dbReference type="EMBL" id="X61240">
    <property type="status" value="NOT_ANNOTATED_CDS"/>
    <property type="molecule type" value="Genomic_DNA"/>
</dbReference>
<dbReference type="PIR" id="S08436">
    <property type="entry name" value="S08436"/>
</dbReference>
<dbReference type="SMR" id="P15833"/>
<dbReference type="PRO" id="PR:P15833"/>
<dbReference type="Proteomes" id="UP000247120">
    <property type="component" value="Segment"/>
</dbReference>
<dbReference type="GO" id="GO:0043657">
    <property type="term" value="C:host cell"/>
    <property type="evidence" value="ECO:0007669"/>
    <property type="project" value="GOC"/>
</dbReference>
<dbReference type="GO" id="GO:0042025">
    <property type="term" value="C:host cell nucleus"/>
    <property type="evidence" value="ECO:0007669"/>
    <property type="project" value="UniProtKB-SubCell"/>
</dbReference>
<dbReference type="GO" id="GO:0020002">
    <property type="term" value="C:host cell plasma membrane"/>
    <property type="evidence" value="ECO:0007669"/>
    <property type="project" value="UniProtKB-SubCell"/>
</dbReference>
<dbReference type="GO" id="GO:0072494">
    <property type="term" value="C:host multivesicular body"/>
    <property type="evidence" value="ECO:0007669"/>
    <property type="project" value="UniProtKB-SubCell"/>
</dbReference>
<dbReference type="GO" id="GO:0016020">
    <property type="term" value="C:membrane"/>
    <property type="evidence" value="ECO:0007669"/>
    <property type="project" value="UniProtKB-KW"/>
</dbReference>
<dbReference type="GO" id="GO:0019013">
    <property type="term" value="C:viral nucleocapsid"/>
    <property type="evidence" value="ECO:0007669"/>
    <property type="project" value="UniProtKB-KW"/>
</dbReference>
<dbReference type="GO" id="GO:0055036">
    <property type="term" value="C:virion membrane"/>
    <property type="evidence" value="ECO:0007669"/>
    <property type="project" value="UniProtKB-SubCell"/>
</dbReference>
<dbReference type="GO" id="GO:0004190">
    <property type="term" value="F:aspartic-type endopeptidase activity"/>
    <property type="evidence" value="ECO:0007669"/>
    <property type="project" value="UniProtKB-KW"/>
</dbReference>
<dbReference type="GO" id="GO:0003677">
    <property type="term" value="F:DNA binding"/>
    <property type="evidence" value="ECO:0007669"/>
    <property type="project" value="UniProtKB-KW"/>
</dbReference>
<dbReference type="GO" id="GO:0003887">
    <property type="term" value="F:DNA-directed DNA polymerase activity"/>
    <property type="evidence" value="ECO:0007669"/>
    <property type="project" value="UniProtKB-KW"/>
</dbReference>
<dbReference type="GO" id="GO:0004533">
    <property type="term" value="F:exoribonuclease H activity"/>
    <property type="evidence" value="ECO:0007669"/>
    <property type="project" value="UniProtKB-EC"/>
</dbReference>
<dbReference type="GO" id="GO:0008289">
    <property type="term" value="F:lipid binding"/>
    <property type="evidence" value="ECO:0007669"/>
    <property type="project" value="UniProtKB-KW"/>
</dbReference>
<dbReference type="GO" id="GO:0035613">
    <property type="term" value="F:RNA stem-loop binding"/>
    <property type="evidence" value="ECO:0007669"/>
    <property type="project" value="TreeGrafter"/>
</dbReference>
<dbReference type="GO" id="GO:0003964">
    <property type="term" value="F:RNA-directed DNA polymerase activity"/>
    <property type="evidence" value="ECO:0007669"/>
    <property type="project" value="UniProtKB-KW"/>
</dbReference>
<dbReference type="GO" id="GO:0004523">
    <property type="term" value="F:RNA-DNA hybrid ribonuclease activity"/>
    <property type="evidence" value="ECO:0007669"/>
    <property type="project" value="InterPro"/>
</dbReference>
<dbReference type="GO" id="GO:0005198">
    <property type="term" value="F:structural molecule activity"/>
    <property type="evidence" value="ECO:0007669"/>
    <property type="project" value="InterPro"/>
</dbReference>
<dbReference type="GO" id="GO:0008270">
    <property type="term" value="F:zinc ion binding"/>
    <property type="evidence" value="ECO:0007669"/>
    <property type="project" value="UniProtKB-KW"/>
</dbReference>
<dbReference type="GO" id="GO:0015074">
    <property type="term" value="P:DNA integration"/>
    <property type="evidence" value="ECO:0007669"/>
    <property type="project" value="UniProtKB-KW"/>
</dbReference>
<dbReference type="GO" id="GO:0006310">
    <property type="term" value="P:DNA recombination"/>
    <property type="evidence" value="ECO:0007669"/>
    <property type="project" value="UniProtKB-KW"/>
</dbReference>
<dbReference type="GO" id="GO:0075713">
    <property type="term" value="P:establishment of integrated proviral latency"/>
    <property type="evidence" value="ECO:0007669"/>
    <property type="project" value="UniProtKB-KW"/>
</dbReference>
<dbReference type="GO" id="GO:0006508">
    <property type="term" value="P:proteolysis"/>
    <property type="evidence" value="ECO:0007669"/>
    <property type="project" value="UniProtKB-KW"/>
</dbReference>
<dbReference type="GO" id="GO:0046718">
    <property type="term" value="P:symbiont entry into host cell"/>
    <property type="evidence" value="ECO:0007669"/>
    <property type="project" value="UniProtKB-KW"/>
</dbReference>
<dbReference type="GO" id="GO:0039657">
    <property type="term" value="P:symbiont-mediated suppression of host gene expression"/>
    <property type="evidence" value="ECO:0007669"/>
    <property type="project" value="UniProtKB-KW"/>
</dbReference>
<dbReference type="GO" id="GO:0044826">
    <property type="term" value="P:viral genome integration into host DNA"/>
    <property type="evidence" value="ECO:0007669"/>
    <property type="project" value="UniProtKB-KW"/>
</dbReference>
<dbReference type="GO" id="GO:0075732">
    <property type="term" value="P:viral penetration into host nucleus"/>
    <property type="evidence" value="ECO:0007669"/>
    <property type="project" value="UniProtKB-KW"/>
</dbReference>
<dbReference type="GO" id="GO:0075523">
    <property type="term" value="P:viral translational frameshifting"/>
    <property type="evidence" value="ECO:0007669"/>
    <property type="project" value="UniProtKB-KW"/>
</dbReference>
<dbReference type="CDD" id="cd05482">
    <property type="entry name" value="HIV_retropepsin_like"/>
    <property type="match status" value="1"/>
</dbReference>
<dbReference type="Gene3D" id="1.10.10.200">
    <property type="match status" value="1"/>
</dbReference>
<dbReference type="Gene3D" id="1.10.1200.30">
    <property type="match status" value="1"/>
</dbReference>
<dbReference type="Gene3D" id="3.30.70.270">
    <property type="match status" value="3"/>
</dbReference>
<dbReference type="Gene3D" id="2.40.70.10">
    <property type="entry name" value="Acid Proteases"/>
    <property type="match status" value="1"/>
</dbReference>
<dbReference type="Gene3D" id="3.10.10.10">
    <property type="entry name" value="HIV Type 1 Reverse Transcriptase, subunit A, domain 1"/>
    <property type="match status" value="1"/>
</dbReference>
<dbReference type="Gene3D" id="1.10.375.10">
    <property type="entry name" value="Human Immunodeficiency Virus Type 1 Capsid Protein"/>
    <property type="match status" value="1"/>
</dbReference>
<dbReference type="Gene3D" id="1.10.150.90">
    <property type="entry name" value="Immunodeficiency lentiviruses, gag gene matrix protein p17"/>
    <property type="match status" value="1"/>
</dbReference>
<dbReference type="Gene3D" id="2.30.30.10">
    <property type="entry name" value="Integrase, C-terminal domain superfamily, retroviral"/>
    <property type="match status" value="1"/>
</dbReference>
<dbReference type="Gene3D" id="3.30.420.10">
    <property type="entry name" value="Ribonuclease H-like superfamily/Ribonuclease H"/>
    <property type="match status" value="2"/>
</dbReference>
<dbReference type="Gene3D" id="1.20.5.760">
    <property type="entry name" value="Single helix bin"/>
    <property type="match status" value="1"/>
</dbReference>
<dbReference type="Gene3D" id="4.10.60.10">
    <property type="entry name" value="Zinc finger, CCHC-type"/>
    <property type="match status" value="1"/>
</dbReference>
<dbReference type="InterPro" id="IPR001969">
    <property type="entry name" value="Aspartic_peptidase_AS"/>
</dbReference>
<dbReference type="InterPro" id="IPR043502">
    <property type="entry name" value="DNA/RNA_pol_sf"/>
</dbReference>
<dbReference type="InterPro" id="IPR045345">
    <property type="entry name" value="Gag_p24_C"/>
</dbReference>
<dbReference type="InterPro" id="IPR017856">
    <property type="entry name" value="Integrase-like_N"/>
</dbReference>
<dbReference type="InterPro" id="IPR036862">
    <property type="entry name" value="Integrase_C_dom_sf_retrovir"/>
</dbReference>
<dbReference type="InterPro" id="IPR001037">
    <property type="entry name" value="Integrase_C_retrovir"/>
</dbReference>
<dbReference type="InterPro" id="IPR001584">
    <property type="entry name" value="Integrase_cat-core"/>
</dbReference>
<dbReference type="InterPro" id="IPR003308">
    <property type="entry name" value="Integrase_Zn-bd_dom_N"/>
</dbReference>
<dbReference type="InterPro" id="IPR000071">
    <property type="entry name" value="Lentvrl_matrix_N"/>
</dbReference>
<dbReference type="InterPro" id="IPR012344">
    <property type="entry name" value="Matrix_HIV/RSV_N"/>
</dbReference>
<dbReference type="InterPro" id="IPR001995">
    <property type="entry name" value="Peptidase_A2_cat"/>
</dbReference>
<dbReference type="InterPro" id="IPR021109">
    <property type="entry name" value="Peptidase_aspartic_dom_sf"/>
</dbReference>
<dbReference type="InterPro" id="IPR034170">
    <property type="entry name" value="Retropepsin-like_cat_dom"/>
</dbReference>
<dbReference type="InterPro" id="IPR018061">
    <property type="entry name" value="Retropepsins"/>
</dbReference>
<dbReference type="InterPro" id="IPR008916">
    <property type="entry name" value="Retrov_capsid_C"/>
</dbReference>
<dbReference type="InterPro" id="IPR008919">
    <property type="entry name" value="Retrov_capsid_N"/>
</dbReference>
<dbReference type="InterPro" id="IPR010999">
    <property type="entry name" value="Retrovr_matrix"/>
</dbReference>
<dbReference type="InterPro" id="IPR043128">
    <property type="entry name" value="Rev_trsase/Diguanyl_cyclase"/>
</dbReference>
<dbReference type="InterPro" id="IPR012337">
    <property type="entry name" value="RNaseH-like_sf"/>
</dbReference>
<dbReference type="InterPro" id="IPR002156">
    <property type="entry name" value="RNaseH_domain"/>
</dbReference>
<dbReference type="InterPro" id="IPR036397">
    <property type="entry name" value="RNaseH_sf"/>
</dbReference>
<dbReference type="InterPro" id="IPR000477">
    <property type="entry name" value="RT_dom"/>
</dbReference>
<dbReference type="InterPro" id="IPR010659">
    <property type="entry name" value="RVT_connect"/>
</dbReference>
<dbReference type="InterPro" id="IPR010661">
    <property type="entry name" value="RVT_thumb"/>
</dbReference>
<dbReference type="InterPro" id="IPR001878">
    <property type="entry name" value="Znf_CCHC"/>
</dbReference>
<dbReference type="InterPro" id="IPR036875">
    <property type="entry name" value="Znf_CCHC_sf"/>
</dbReference>
<dbReference type="PANTHER" id="PTHR41694">
    <property type="entry name" value="ENDOGENOUS RETROVIRUS GROUP K MEMBER POL PROTEIN"/>
    <property type="match status" value="1"/>
</dbReference>
<dbReference type="PANTHER" id="PTHR41694:SF3">
    <property type="entry name" value="RNA-DIRECTED DNA POLYMERASE-RELATED"/>
    <property type="match status" value="1"/>
</dbReference>
<dbReference type="Pfam" id="PF00540">
    <property type="entry name" value="Gag_p17"/>
    <property type="match status" value="1"/>
</dbReference>
<dbReference type="Pfam" id="PF00607">
    <property type="entry name" value="Gag_p24"/>
    <property type="match status" value="1"/>
</dbReference>
<dbReference type="Pfam" id="PF19317">
    <property type="entry name" value="Gag_p24_C"/>
    <property type="match status" value="1"/>
</dbReference>
<dbReference type="Pfam" id="PF00552">
    <property type="entry name" value="IN_DBD_C"/>
    <property type="match status" value="1"/>
</dbReference>
<dbReference type="Pfam" id="PF02022">
    <property type="entry name" value="Integrase_Zn"/>
    <property type="match status" value="1"/>
</dbReference>
<dbReference type="Pfam" id="PF00075">
    <property type="entry name" value="RNase_H"/>
    <property type="match status" value="1"/>
</dbReference>
<dbReference type="Pfam" id="PF00665">
    <property type="entry name" value="rve"/>
    <property type="match status" value="1"/>
</dbReference>
<dbReference type="Pfam" id="PF00077">
    <property type="entry name" value="RVP"/>
    <property type="match status" value="1"/>
</dbReference>
<dbReference type="Pfam" id="PF00078">
    <property type="entry name" value="RVT_1"/>
    <property type="match status" value="1"/>
</dbReference>
<dbReference type="Pfam" id="PF06815">
    <property type="entry name" value="RVT_connect"/>
    <property type="match status" value="1"/>
</dbReference>
<dbReference type="Pfam" id="PF06817">
    <property type="entry name" value="RVT_thumb"/>
    <property type="match status" value="1"/>
</dbReference>
<dbReference type="Pfam" id="PF00098">
    <property type="entry name" value="zf-CCHC"/>
    <property type="match status" value="2"/>
</dbReference>
<dbReference type="PRINTS" id="PR00234">
    <property type="entry name" value="HIV1MATRIX"/>
</dbReference>
<dbReference type="SMART" id="SM00343">
    <property type="entry name" value="ZnF_C2HC"/>
    <property type="match status" value="2"/>
</dbReference>
<dbReference type="SUPFAM" id="SSF50630">
    <property type="entry name" value="Acid proteases"/>
    <property type="match status" value="1"/>
</dbReference>
<dbReference type="SUPFAM" id="SSF50122">
    <property type="entry name" value="DNA-binding domain of retroviral integrase"/>
    <property type="match status" value="1"/>
</dbReference>
<dbReference type="SUPFAM" id="SSF56672">
    <property type="entry name" value="DNA/RNA polymerases"/>
    <property type="match status" value="1"/>
</dbReference>
<dbReference type="SUPFAM" id="SSF46919">
    <property type="entry name" value="N-terminal Zn binding domain of HIV integrase"/>
    <property type="match status" value="1"/>
</dbReference>
<dbReference type="SUPFAM" id="SSF47836">
    <property type="entry name" value="Retroviral matrix proteins"/>
    <property type="match status" value="1"/>
</dbReference>
<dbReference type="SUPFAM" id="SSF47353">
    <property type="entry name" value="Retrovirus capsid dimerization domain-like"/>
    <property type="match status" value="1"/>
</dbReference>
<dbReference type="SUPFAM" id="SSF47943">
    <property type="entry name" value="Retrovirus capsid protein, N-terminal core domain"/>
    <property type="match status" value="1"/>
</dbReference>
<dbReference type="SUPFAM" id="SSF57756">
    <property type="entry name" value="Retrovirus zinc finger-like domains"/>
    <property type="match status" value="1"/>
</dbReference>
<dbReference type="SUPFAM" id="SSF53098">
    <property type="entry name" value="Ribonuclease H-like"/>
    <property type="match status" value="2"/>
</dbReference>
<dbReference type="PROSITE" id="PS50175">
    <property type="entry name" value="ASP_PROT_RETROV"/>
    <property type="match status" value="1"/>
</dbReference>
<dbReference type="PROSITE" id="PS00141">
    <property type="entry name" value="ASP_PROTEASE"/>
    <property type="match status" value="1"/>
</dbReference>
<dbReference type="PROSITE" id="PS50994">
    <property type="entry name" value="INTEGRASE"/>
    <property type="match status" value="1"/>
</dbReference>
<dbReference type="PROSITE" id="PS51027">
    <property type="entry name" value="INTEGRASE_DBD"/>
    <property type="match status" value="1"/>
</dbReference>
<dbReference type="PROSITE" id="PS50879">
    <property type="entry name" value="RNASE_H_1"/>
    <property type="match status" value="1"/>
</dbReference>
<dbReference type="PROSITE" id="PS50878">
    <property type="entry name" value="RT_POL"/>
    <property type="match status" value="1"/>
</dbReference>
<dbReference type="PROSITE" id="PS50158">
    <property type="entry name" value="ZF_CCHC"/>
    <property type="match status" value="2"/>
</dbReference>
<dbReference type="PROSITE" id="PS50876">
    <property type="entry name" value="ZF_INTEGRASE"/>
    <property type="match status" value="1"/>
</dbReference>
<comment type="function">
    <molecule>Gag-Pol polyprotein</molecule>
    <text evidence="1">Mediates, with Gag polyprotein, the essential events in virion assembly, including binding the plasma membrane, making the protein-protein interactions necessary to create spherical particles, recruiting the viral Env proteins, and packaging the genomic RNA via direct interactions with the RNA packaging sequence (Psi). Gag-Pol polyprotein may regulate its own translation, by the binding genomic RNA in the 5'-UTR. At low concentration, the polyprotein would promote translation, whereas at high concentration, the polyprotein would encapsidate genomic RNA and then shut off translation.</text>
</comment>
<comment type="function">
    <molecule>Matrix protein p17</molecule>
    <text evidence="8">Targets the polyprotein to the plasma membrane via a multipartite membrane-binding signal, that includes its myristoylated N-terminus. Matrix protein is part of the pre-integration complex. Implicated in the release from host cell mediated by Vpu. Binds to RNA.</text>
</comment>
<comment type="function">
    <molecule>Capsid protein p24</molecule>
    <text evidence="5 8">Forms the conical core that encapsulates the genomic RNA-nucleocapsid complex in the virion. Most core are conical, with only 7% tubular. The core is constituted by capsid protein hexamer subunits. The core is disassembled soon after virion entry (By similarity). Host restriction factors such as TRIM5-alpha or TRIMCyp bind retroviral capsids and cause premature capsid disassembly, leading to blocks in reverse transcription. Capsid restriction by TRIM5 is one of the factors which restricts HIV-1 to the human species. Host PIN1 apparently facilitates the virion uncoating. On the other hand, interactions with PDZD8 or CYPA stabilize the capsid.</text>
</comment>
<comment type="function">
    <molecule>Nucleocapsid protein p7</molecule>
    <text evidence="5">Encapsulates and protects viral dimeric unspliced genomic RNA (gRNA). Binds these RNAs through its zinc fingers. Acts as a nucleic acid chaperone which is involved in rearangement of nucleic acid secondary structure during gRNA retrotranscription. Also facilitates template switch leading to recombination. As part of the polyprotein, participates in gRNA dimerization, packaging, tRNA incorporation and virion assembly.</text>
</comment>
<comment type="function">
    <molecule>Protease</molecule>
    <text evidence="5 11">Aspartyl protease that mediates proteolytic cleavages of Gag and Gag-Pol polyproteins during or shortly after the release of the virion from the plasma membrane. Cleavages take place as an ordered, step-wise cascade to yield mature proteins. This process is called maturation. Displays maximal activity during the budding process just prior to particle release from the cell. Also cleaves Nef and Vif, probably concomitantly with viral structural proteins on maturation of virus particles. Hydrolyzes host EIF4GI and PABP1 in order to shut off the capped cellular mRNA translation. The resulting inhibition of cellular protein synthesis serves to ensure maximal viral gene expression and to evade host immune response (By similarity).</text>
</comment>
<comment type="function">
    <molecule>Reverse transcriptase/ribonuclease H</molecule>
    <text evidence="5">Multifunctional enzyme that converts the viral RNA genome into dsDNA in the cytoplasm, shortly after virus entry into the cell. This enzyme displays a DNA polymerase activity that can copy either DNA or RNA templates, and a ribonuclease H (RNase H) activity that cleaves the RNA strand of RNA-DNA heteroduplexes in a partially processive 3' to 5' endonucleasic mode. Conversion of viral genomic RNA into dsDNA requires many steps. A tRNA(3)-Lys binds to the primer-binding site (PBS) situated at the 5'-end of the viral RNA. RT uses the 3' end of the tRNA primer to perform a short round of RNA-dependent minus-strand DNA synthesis. The reading proceeds through the U5 region and ends after the repeated (R) region which is present at both ends of viral RNA. The portion of the RNA-DNA heteroduplex is digested by the RNase H, resulting in a ssDNA product attached to the tRNA primer. This ssDNA/tRNA hybridizes with the identical R region situated at the 3' end of viral RNA. This template exchange, known as minus-strand DNA strong stop transfer, can be either intra- or intermolecular. RT uses the 3' end of this newly synthesized short ssDNA to perform the RNA-dependent minus-strand DNA synthesis of the whole template. RNase H digests the RNA template except for two polypurine tracts (PPTs) situated at the 5'-end and near the center of the genome. It is not clear if both polymerase and RNase H activities are simultaneous. RNase H probably can proceed both in a polymerase-dependent (RNA cut into small fragments by the same RT performing DNA synthesis) and a polymerase-independent mode (cleavage of remaining RNA fragments by free RTs). Secondly, RT performs DNA-directed plus-strand DNA synthesis using the PPTs that have not been removed by RNase H as primers. PPTs and tRNA primers are then removed by RNase H. The 3' and 5' ssDNA PBS regions hybridize to form a circular dsDNA intermediate. Strand displacement synthesis by RT to the PBS and PPT ends produces a blunt ended, linear dsDNA copy of the viral genome that includes long terminal repeats (LTRs) at both ends.</text>
</comment>
<comment type="function">
    <molecule>Integrase</molecule>
    <text evidence="5">Catalyzes viral DNA integration into the host chromosome, by performing a series of DNA cutting and joining reactions. This enzyme activity takes place after virion entry into a cell and reverse transcription of the RNA genome in dsDNA. The first step in the integration process is 3' processing. This step requires a complex comprising the viral genome, matrix protein, Vpr and integrase. This complex is called the pre-integration complex (PIC). The integrase protein removes 2 nucleotides from each 3' end of the viral DNA, leaving recessed CA OH's at the 3' ends. In the second step, the PIC enters cell nucleus. This process is mediated through integrase and Vpr proteins, and allows the virus to infect a non dividing cell. This ability to enter the nucleus is specific of lentiviruses, other retroviruses cannot and rely on cell division to access cell chromosomes. In the third step, termed strand transfer, the integrase protein joins the previously processed 3' ends to the 5' ends of strands of target cellular DNA at the site of integration. The 5'-ends are produced by integrase-catalyzed staggered cuts, 5 bp apart. A Y-shaped, gapped, recombination intermediate results, with the 5'-ends of the viral DNA strands and the 3' ends of target DNA strands remaining unjoined, flanking a gap of 5 bp. The last step is viral DNA integration into host chromosome. This involves host DNA repair synthesis in which the 5 bp gaps between the unjoined strands are filled in and then ligated. Since this process occurs at both cuts flanking the HIV genome, a 5 bp duplication of host DNA is produced at the ends of HIV-1 integration. Alternatively, Integrase may catalyze the excision of viral DNA just after strand transfer, this is termed disintegration.</text>
</comment>
<comment type="catalytic activity">
    <reaction evidence="11">
        <text>Endopeptidase for which the P1 residue is preferably hydrophobic.</text>
        <dbReference type="EC" id="3.4.23.47"/>
    </reaction>
</comment>
<comment type="catalytic activity">
    <reaction evidence="1">
        <text>Endohydrolysis of RNA in RNA/DNA hybrids. Three different cleavage modes: 1. sequence-specific internal cleavage of RNA. Human immunodeficiency virus type 1 and Moloney murine leukemia virus enzymes prefer to cleave the RNA strand one nucleotide away from the RNA-DNA junction. 2. RNA 5'-end directed cleavage 13-19 nucleotides from the RNA end. 3. DNA 3'-end directed cleavage 15-20 nucleotides away from the primer terminus.</text>
        <dbReference type="EC" id="3.1.26.13"/>
    </reaction>
</comment>
<comment type="catalytic activity">
    <reaction evidence="1">
        <text>3'-end directed exonucleolytic cleavage of viral RNA-DNA hybrid.</text>
        <dbReference type="EC" id="3.1.13.2"/>
    </reaction>
</comment>
<comment type="catalytic activity">
    <reaction evidence="12">
        <text>DNA(n) + a 2'-deoxyribonucleoside 5'-triphosphate = DNA(n+1) + diphosphate</text>
        <dbReference type="Rhea" id="RHEA:22508"/>
        <dbReference type="Rhea" id="RHEA-COMP:17339"/>
        <dbReference type="Rhea" id="RHEA-COMP:17340"/>
        <dbReference type="ChEBI" id="CHEBI:33019"/>
        <dbReference type="ChEBI" id="CHEBI:61560"/>
        <dbReference type="ChEBI" id="CHEBI:173112"/>
        <dbReference type="EC" id="2.7.7.49"/>
    </reaction>
</comment>
<comment type="catalytic activity">
    <reaction evidence="12">
        <text>DNA(n) + a 2'-deoxyribonucleoside 5'-triphosphate = DNA(n+1) + diphosphate</text>
        <dbReference type="Rhea" id="RHEA:22508"/>
        <dbReference type="Rhea" id="RHEA-COMP:17339"/>
        <dbReference type="Rhea" id="RHEA-COMP:17340"/>
        <dbReference type="ChEBI" id="CHEBI:33019"/>
        <dbReference type="ChEBI" id="CHEBI:61560"/>
        <dbReference type="ChEBI" id="CHEBI:173112"/>
        <dbReference type="EC" id="2.7.7.7"/>
    </reaction>
</comment>
<comment type="cofactor">
    <cofactor evidence="1">
        <name>Mg(2+)</name>
        <dbReference type="ChEBI" id="CHEBI:18420"/>
    </cofactor>
    <text evidence="1">Binds 2 magnesium ions for reverse transcriptase polymerase activity.</text>
</comment>
<comment type="cofactor">
    <cofactor evidence="1">
        <name>Mg(2+)</name>
        <dbReference type="ChEBI" id="CHEBI:18420"/>
    </cofactor>
    <text evidence="1">Binds 2 magnesium ions for ribonuclease H (RNase H) activity. Substrate-binding is a precondition for magnesium binding.</text>
</comment>
<comment type="cofactor">
    <cofactor evidence="1">
        <name>Mg(2+)</name>
        <dbReference type="ChEBI" id="CHEBI:18420"/>
    </cofactor>
    <text evidence="1">Magnesium ions are required for integrase activity. Binds at least 1, maybe 2 magnesium ions.</text>
</comment>
<comment type="activity regulation">
    <text evidence="1">Protease: The viral protease is inhibited by many synthetic protease inhibitors (PIs), such as amprenavir, atazanavir, indinavir, loprinavir, nelfinavir, ritonavir and saquinavir. Use of protease inhibitors in tritherapy regimens permit more ambitious therapeutic strategies. Reverse transcriptase/ribonuclease H: RT can be inhibited either by nucleoside RT inhibitors (NRTIs) or by non nucleoside RT inhibitors (NNRTIs). NRTIs act as chain terminators, whereas NNRTIs inhibit DNA polymerization by binding a small hydrophobic pocket near the RT active site and inducing an allosteric change in this region. Classical NRTIs are abacavir, adefovir (PMEA), didanosine (ddI), lamivudine (3TC), stavudine (d4T), tenofovir (PMPA), zalcitabine (ddC), and zidovudine (AZT). Classical NNRTIs are atevirdine (BHAP U-87201E), delavirdine, efavirenz (DMP-266), emivirine (I-EBU), and nevirapine (BI-RG-587). The tritherapies used as a basic effective treatment of AIDS associate two NRTIs and one NNRTI.</text>
</comment>
<comment type="subunit">
    <molecule>Matrix protein p17</molecule>
    <text evidence="6 7">Homotrimer; further assembles as hexamers of trimers. Interacts with gp41 (via C-terminus). Interacts with host CALM1; this interaction induces a conformational change in the Matrix protein, triggering exposure of the myristate group. Interacts with host AP3D1; this interaction allows the polyprotein trafficking to multivesicular bodies during virus assembly. Part of the pre-integration complex (PIC) which is composed of viral genome, matrix protein, Vpr and integrase.</text>
</comment>
<comment type="subunit">
    <molecule>Capsid protein p24</molecule>
    <text evidence="2 6 7">Homodimer; the homodimer further multimerizes as homohexamers or homopentamers. Interacts with human PPIA/CYPA. Interacts with human NUP153. Interacts with host PDZD8; this interaction stabilizes the capsid. Interacts with monkey TRIM5; this interaction destabilizes the capsid.</text>
</comment>
<comment type="subunit">
    <molecule>Protease</molecule>
    <text evidence="5 8">Homodimer, whose active site consists of two apposed aspartic acid residues.</text>
</comment>
<comment type="subunit">
    <molecule>Reverse transcriptase/ribonuclease H</molecule>
    <text evidence="3">Heterodimer of p66 RT and p51 RT (RT p66/p51) (By similarity). Heterodimerization of RT is essential for DNA polymerase activity (By similarity). The overall folding of the subdomains is similar in p66 RT and p51 RT but the spatial arrangements of the subdomains are dramatically different (By similarity).</text>
</comment>
<comment type="subunit">
    <molecule>Integrase</molecule>
    <text evidence="4 5 8">Homotetramer; may further associate as a homohexadecamer (By similarity). Part of the pre-integration complex (PIC) which is composed of viral genome, matrix protein, Vpr and integrase. Interacts with human SMARCB1/INI1 and human PSIP1/LEDGF isoform 1. Interacts with human KPNA3; this interaction might play a role in nuclear import of the pre-integration complex (By similarity). Interacts with human NUP153; this interaction might play a role in nuclear import of the pre-integration complex (By similarity).</text>
</comment>
<comment type="subcellular location">
    <molecule>Gag-Pol polyprotein</molecule>
    <subcellularLocation>
        <location>Host cell membrane</location>
        <topology>Lipid-anchor</topology>
    </subcellularLocation>
    <subcellularLocation>
        <location>Host endosome</location>
        <location>Host multivesicular body</location>
    </subcellularLocation>
    <text evidence="8">These locations are linked to virus assembly sites. The main location is the cell membrane, but under some circumstances, late endosomal compartments can serve as productive sites for virion assembly.</text>
</comment>
<comment type="subcellular location">
    <molecule>Matrix protein p17</molecule>
    <subcellularLocation>
        <location>Virion membrane</location>
        <topology evidence="19">Lipid-anchor</topology>
    </subcellularLocation>
    <subcellularLocation>
        <location evidence="1">Host nucleus</location>
    </subcellularLocation>
    <subcellularLocation>
        <location evidence="1">Host cytoplasm</location>
    </subcellularLocation>
</comment>
<comment type="subcellular location">
    <molecule>Capsid protein p24</molecule>
    <subcellularLocation>
        <location evidence="19">Virion</location>
    </subcellularLocation>
</comment>
<comment type="subcellular location">
    <molecule>Nucleocapsid protein p7</molecule>
    <subcellularLocation>
        <location evidence="19">Virion</location>
    </subcellularLocation>
</comment>
<comment type="subcellular location">
    <molecule>Reverse transcriptase/ribonuclease H</molecule>
    <subcellularLocation>
        <location evidence="19">Virion</location>
    </subcellularLocation>
</comment>
<comment type="subcellular location">
    <molecule>Integrase</molecule>
    <subcellularLocation>
        <location evidence="19">Virion</location>
    </subcellularLocation>
    <subcellularLocation>
        <location evidence="19">Host nucleus</location>
    </subcellularLocation>
    <subcellularLocation>
        <location evidence="19">Host cytoplasm</location>
    </subcellularLocation>
    <text evidence="19">Nuclear at initial phase, cytoplasmic at assembly.</text>
</comment>
<comment type="alternative products">
    <event type="ribosomal frameshifting"/>
    <isoform>
        <id>P15833-1</id>
        <name>Gag-Pol polyprotein</name>
        <sequence type="displayed"/>
    </isoform>
    <isoform>
        <id>P15832-1</id>
        <name>Gag polyprotein</name>
        <sequence type="external"/>
    </isoform>
    <text>Translation results in the formation of the Gag polyprotein most of the time. Ribosomal frameshifting at the gag-pol genes boundary occurs at low frequency and produces the Gag-Pol polyprotein. This strategy of translation probably allows the virus to modulate the quantity of each viral protein. Maintenance of a correct Gag to Gag-Pol ratio is essential for RNA dimerization and viral infectivity.</text>
</comment>
<comment type="domain">
    <molecule>Reverse transcriptase/ribonuclease H</molecule>
    <text evidence="1">RT is structured in five subdomains: finger, palm, thumb, connection and RNase H. Within the palm subdomain, the 'primer grip' region is thought to be involved in the positioning of the primer terminus for accommodating the incoming nucleotide. The RNase H domain stabilizes the association of RT with primer-template.</text>
</comment>
<comment type="domain">
    <molecule>Reverse transcriptase/ribonuclease H</molecule>
    <text evidence="1">The tryptophan repeat motif is involved in RT p66/p51 dimerization (By similarity).</text>
</comment>
<comment type="domain">
    <molecule>Integrase</molecule>
    <text evidence="1">The core domain contains the D-x(n)-D-x(35)-E motif, named for the phylogenetically conserved glutamic acid and aspartic acid residues and the invariant 35 amino acid spacing between the second and third acidic residues. Each acidic residue of the D,D(35)E motif is independently essential for the 3'-processing and strand transfer activities of purified integrase protein.</text>
</comment>
<comment type="PTM">
    <molecule>Gag-Pol polyprotein</molecule>
    <text evidence="5 12">Specific enzymatic cleavages by the viral protease yield mature proteins. The protease is released by autocatalytic cleavage. The polyprotein is cleaved during and after budding, this process is termed maturation. Proteolytic cleavage of p66 RT removes the RNase H domain to yield the p51 RT subunit. Nucleocapsid protein p7 might be further cleaved after virus entry.</text>
</comment>
<comment type="miscellaneous">
    <molecule>Reverse transcriptase/ribonuclease H</molecule>
    <text evidence="1">Error-prone enzyme that lacks a proof-reading function. High mutations rate is a direct consequence of this characteristic. RT also displays frequent template switching leading to high recombination rate. Recombination mostly occurs between homologous regions of the two copackaged RNA genomes. If these two RNA molecules derive from different viral strains, reverse transcription will give rise to highly recombinated proviral DNAs.</text>
</comment>
<comment type="miscellaneous">
    <molecule>Isoform Gag-Pol polyprotein</molecule>
    <text>Produced by -1 ribosomal frameshifting.</text>
</comment>
<keyword id="KW-0014">AIDS</keyword>
<keyword id="KW-0064">Aspartyl protease</keyword>
<keyword id="KW-0167">Capsid protein</keyword>
<keyword id="KW-0229">DNA integration</keyword>
<keyword id="KW-0233">DNA recombination</keyword>
<keyword id="KW-0238">DNA-binding</keyword>
<keyword id="KW-0239">DNA-directed DNA polymerase</keyword>
<keyword id="KW-0255">Endonuclease</keyword>
<keyword id="KW-1262">Eukaryotic host gene expression shutoff by virus</keyword>
<keyword id="KW-1193">Eukaryotic host translation shutoff by virus</keyword>
<keyword id="KW-1032">Host cell membrane</keyword>
<keyword id="KW-1035">Host cytoplasm</keyword>
<keyword id="KW-1039">Host endosome</keyword>
<keyword id="KW-1190">Host gene expression shutoff by virus</keyword>
<keyword id="KW-1043">Host membrane</keyword>
<keyword id="KW-1048">Host nucleus</keyword>
<keyword id="KW-0945">Host-virus interaction</keyword>
<keyword id="KW-0378">Hydrolase</keyword>
<keyword id="KW-0446">Lipid-binding</keyword>
<keyword id="KW-0449">Lipoprotein</keyword>
<keyword id="KW-0460">Magnesium</keyword>
<keyword id="KW-0472">Membrane</keyword>
<keyword id="KW-0479">Metal-binding</keyword>
<keyword id="KW-0511">Multifunctional enzyme</keyword>
<keyword id="KW-0519">Myristate</keyword>
<keyword id="KW-0540">Nuclease</keyword>
<keyword id="KW-0548">Nucleotidyltransferase</keyword>
<keyword id="KW-0597">Phosphoprotein</keyword>
<keyword id="KW-0645">Protease</keyword>
<keyword id="KW-0677">Repeat</keyword>
<keyword id="KW-0688">Ribosomal frameshifting</keyword>
<keyword id="KW-0694">RNA-binding</keyword>
<keyword id="KW-0695">RNA-directed DNA polymerase</keyword>
<keyword id="KW-0808">Transferase</keyword>
<keyword id="KW-1179">Viral genome integration</keyword>
<keyword id="KW-0543">Viral nucleoprotein</keyword>
<keyword id="KW-1163">Viral penetration into host nucleus</keyword>
<keyword id="KW-1188">Viral release from host cell</keyword>
<keyword id="KW-0946">Virion</keyword>
<keyword id="KW-0917">Virion maturation</keyword>
<keyword id="KW-1160">Virus entry into host cell</keyword>
<keyword id="KW-0862">Zinc</keyword>
<keyword id="KW-0863">Zinc-finger</keyword>
<accession>P15833</accession>